<proteinExistence type="evidence at protein level"/>
<evidence type="ECO:0000250" key="1"/>
<evidence type="ECO:0000255" key="2"/>
<evidence type="ECO:0000305" key="3"/>
<evidence type="ECO:0007829" key="4">
    <source>
        <dbReference type="PDB" id="8YN0"/>
    </source>
</evidence>
<gene>
    <name type="ordered locus">At5g66890</name>
    <name type="ORF">MUD21.15</name>
</gene>
<sequence>MNSNSIQSFDALPHNLRECFLDMASFLEDQRIIASTIIDLWSASYGKEGMNNLQDLASRNLLKLLPIGRNEYEDGFYNELLVKQDNVLREFAINQCLKESSSIFERKRLNLEIQDNKFPNWCLNPKQPIVINASLFSISTDDSFASSWFEMDCPNVEALVLNISSSNYALPNFIATMKELKVVIIINHGLEPAKLTNLSCLSSLPNLKRIRFEKVSISLLDIPKLGLKSLEKLSLWFCHVVDALNELEDVSETLQSLQEIEIDYCYNLDELPYWISQVVSLKKLSVTNCNKLCRVIEAIGDLRDLETLRLSSCASLLELPETIDRLDNLRFLDVSGGFQLKNLPLEIGKLKKLEKISMKDCYRCELPDSVKNLENLEVKCDEDTAFLWKILKPEMKNLTITEEKTEHNLNLLQLF</sequence>
<organism>
    <name type="scientific">Arabidopsis thaliana</name>
    <name type="common">Mouse-ear cress</name>
    <dbReference type="NCBI Taxonomy" id="3702"/>
    <lineage>
        <taxon>Eukaryota</taxon>
        <taxon>Viridiplantae</taxon>
        <taxon>Streptophyta</taxon>
        <taxon>Embryophyta</taxon>
        <taxon>Tracheophyta</taxon>
        <taxon>Spermatophyta</taxon>
        <taxon>Magnoliopsida</taxon>
        <taxon>eudicotyledons</taxon>
        <taxon>Gunneridae</taxon>
        <taxon>Pentapetalae</taxon>
        <taxon>rosids</taxon>
        <taxon>malvids</taxon>
        <taxon>Brassicales</taxon>
        <taxon>Brassicaceae</taxon>
        <taxon>Camelineae</taxon>
        <taxon>Arabidopsis</taxon>
    </lineage>
</organism>
<dbReference type="EMBL" id="AB010700">
    <property type="protein sequence ID" value="BAB08631.1"/>
    <property type="molecule type" value="Genomic_DNA"/>
</dbReference>
<dbReference type="EMBL" id="CP002688">
    <property type="protein sequence ID" value="AED98275.1"/>
    <property type="molecule type" value="Genomic_DNA"/>
</dbReference>
<dbReference type="RefSeq" id="NP_201490.1">
    <property type="nucleotide sequence ID" value="NM_126088.2"/>
</dbReference>
<dbReference type="PDB" id="8YL7">
    <property type="method" value="EM"/>
    <property type="resolution" value="3.10 A"/>
    <property type="chains" value="C=1-415"/>
</dbReference>
<dbReference type="PDB" id="8YN0">
    <property type="method" value="X-ray"/>
    <property type="resolution" value="2.49 A"/>
    <property type="chains" value="D/H=1-415"/>
</dbReference>
<dbReference type="PDBsum" id="8YL7"/>
<dbReference type="PDBsum" id="8YN0"/>
<dbReference type="EMDB" id="EMD-39384"/>
<dbReference type="SMR" id="Q9FKZ2"/>
<dbReference type="STRING" id="3702.Q9FKZ2"/>
<dbReference type="PaxDb" id="3702-AT5G66890.1"/>
<dbReference type="EnsemblPlants" id="AT5G66890.1">
    <property type="protein sequence ID" value="AT5G66890.1"/>
    <property type="gene ID" value="AT5G66890"/>
</dbReference>
<dbReference type="GeneID" id="836823"/>
<dbReference type="Gramene" id="AT5G66890.1">
    <property type="protein sequence ID" value="AT5G66890.1"/>
    <property type="gene ID" value="AT5G66890"/>
</dbReference>
<dbReference type="KEGG" id="ath:AT5G66890"/>
<dbReference type="Araport" id="AT5G66890"/>
<dbReference type="TAIR" id="AT5G66890">
    <property type="gene designation" value="NRG1.3"/>
</dbReference>
<dbReference type="eggNOG" id="ENOG502QSSA">
    <property type="taxonomic scope" value="Eukaryota"/>
</dbReference>
<dbReference type="HOGENOM" id="CLU_012216_1_0_1"/>
<dbReference type="InParanoid" id="Q9FKZ2"/>
<dbReference type="OMA" id="SSWFEMD"/>
<dbReference type="PhylomeDB" id="Q9FKZ2"/>
<dbReference type="PRO" id="PR:Q9FKZ2"/>
<dbReference type="Proteomes" id="UP000006548">
    <property type="component" value="Chromosome 5"/>
</dbReference>
<dbReference type="ExpressionAtlas" id="Q9FKZ2">
    <property type="expression patterns" value="baseline and differential"/>
</dbReference>
<dbReference type="GO" id="GO:0098542">
    <property type="term" value="P:defense response to other organism"/>
    <property type="evidence" value="ECO:0000316"/>
    <property type="project" value="TAIR"/>
</dbReference>
<dbReference type="Gene3D" id="3.80.10.10">
    <property type="entry name" value="Ribonuclease Inhibitor"/>
    <property type="match status" value="1"/>
</dbReference>
<dbReference type="Gene3D" id="1.10.10.10">
    <property type="entry name" value="Winged helix-like DNA-binding domain superfamily/Winged helix DNA-binding domain"/>
    <property type="match status" value="1"/>
</dbReference>
<dbReference type="InterPro" id="IPR032675">
    <property type="entry name" value="LRR_dom_sf"/>
</dbReference>
<dbReference type="InterPro" id="IPR055414">
    <property type="entry name" value="LRR_R13L4/SHOC2-like"/>
</dbReference>
<dbReference type="InterPro" id="IPR036388">
    <property type="entry name" value="WH-like_DNA-bd_sf"/>
</dbReference>
<dbReference type="PANTHER" id="PTHR36766">
    <property type="entry name" value="PLANT BROAD-SPECTRUM MILDEW RESISTANCE PROTEIN RPW8"/>
    <property type="match status" value="1"/>
</dbReference>
<dbReference type="PANTHER" id="PTHR36766:SF3">
    <property type="entry name" value="RPW8 DOMAIN-CONTAINING PROTEIN"/>
    <property type="match status" value="1"/>
</dbReference>
<dbReference type="Pfam" id="PF23598">
    <property type="entry name" value="LRR_14"/>
    <property type="match status" value="1"/>
</dbReference>
<dbReference type="SUPFAM" id="SSF52047">
    <property type="entry name" value="RNI-like"/>
    <property type="match status" value="1"/>
</dbReference>
<keyword id="KW-0002">3D-structure</keyword>
<keyword id="KW-0175">Coiled coil</keyword>
<keyword id="KW-0433">Leucine-rich repeat</keyword>
<keyword id="KW-0611">Plant defense</keyword>
<keyword id="KW-1185">Reference proteome</keyword>
<keyword id="KW-0677">Repeat</keyword>
<protein>
    <recommendedName>
        <fullName>Probable disease resistance protein At5g66890</fullName>
    </recommendedName>
</protein>
<name>DRL41_ARATH</name>
<feature type="chain" id="PRO_0000212773" description="Probable disease resistance protein At5g66890">
    <location>
        <begin position="1"/>
        <end position="415"/>
    </location>
</feature>
<feature type="domain" description="NB-ARC">
    <location>
        <begin position="8"/>
        <end position="43"/>
    </location>
</feature>
<feature type="repeat" description="LRR 1">
    <location>
        <begin position="229"/>
        <end position="251"/>
    </location>
</feature>
<feature type="repeat" description="LRR 2">
    <location>
        <begin position="256"/>
        <end position="278"/>
    </location>
</feature>
<feature type="repeat" description="LRR 3">
    <location>
        <begin position="280"/>
        <end position="303"/>
    </location>
</feature>
<feature type="repeat" description="LRR 4">
    <location>
        <begin position="304"/>
        <end position="326"/>
    </location>
</feature>
<feature type="repeat" description="LRR 5">
    <location>
        <begin position="328"/>
        <end position="351"/>
    </location>
</feature>
<feature type="repeat" description="LRR 6">
    <location>
        <begin position="352"/>
        <end position="373"/>
    </location>
</feature>
<feature type="coiled-coil region" evidence="2">
    <location>
        <begin position="239"/>
        <end position="260"/>
    </location>
</feature>
<feature type="turn" evidence="4">
    <location>
        <begin position="3"/>
        <end position="5"/>
    </location>
</feature>
<feature type="helix" evidence="4">
    <location>
        <begin position="6"/>
        <end position="10"/>
    </location>
</feature>
<feature type="helix" evidence="4">
    <location>
        <begin position="14"/>
        <end position="22"/>
    </location>
</feature>
<feature type="helix" evidence="4">
    <location>
        <begin position="23"/>
        <end position="25"/>
    </location>
</feature>
<feature type="helix" evidence="4">
    <location>
        <begin position="34"/>
        <end position="45"/>
    </location>
</feature>
<feature type="helix" evidence="4">
    <location>
        <begin position="46"/>
        <end position="48"/>
    </location>
</feature>
<feature type="helix" evidence="4">
    <location>
        <begin position="49"/>
        <end position="58"/>
    </location>
</feature>
<feature type="strand" evidence="4">
    <location>
        <begin position="61"/>
        <end position="66"/>
    </location>
</feature>
<feature type="helix" evidence="4">
    <location>
        <begin position="72"/>
        <end position="74"/>
    </location>
</feature>
<feature type="strand" evidence="4">
    <location>
        <begin position="80"/>
        <end position="83"/>
    </location>
</feature>
<feature type="helix" evidence="4">
    <location>
        <begin position="86"/>
        <end position="98"/>
    </location>
</feature>
<feature type="turn" evidence="4">
    <location>
        <begin position="103"/>
        <end position="105"/>
    </location>
</feature>
<feature type="strand" evidence="4">
    <location>
        <begin position="107"/>
        <end position="114"/>
    </location>
</feature>
<feature type="helix" evidence="4">
    <location>
        <begin position="120"/>
        <end position="123"/>
    </location>
</feature>
<feature type="strand" evidence="4">
    <location>
        <begin position="134"/>
        <end position="140"/>
    </location>
</feature>
<feature type="strand" evidence="4">
    <location>
        <begin position="157"/>
        <end position="163"/>
    </location>
</feature>
<feature type="strand" evidence="4">
    <location>
        <begin position="166"/>
        <end position="169"/>
    </location>
</feature>
<feature type="helix" evidence="4">
    <location>
        <begin position="172"/>
        <end position="176"/>
    </location>
</feature>
<feature type="strand" evidence="4">
    <location>
        <begin position="182"/>
        <end position="187"/>
    </location>
</feature>
<feature type="strand" evidence="4">
    <location>
        <begin position="189"/>
        <end position="191"/>
    </location>
</feature>
<feature type="strand" evidence="4">
    <location>
        <begin position="193"/>
        <end position="196"/>
    </location>
</feature>
<feature type="helix" evidence="4">
    <location>
        <begin position="198"/>
        <end position="201"/>
    </location>
</feature>
<feature type="strand" evidence="4">
    <location>
        <begin position="209"/>
        <end position="217"/>
    </location>
</feature>
<feature type="helix" evidence="4">
    <location>
        <begin position="222"/>
        <end position="225"/>
    </location>
</feature>
<feature type="strand" evidence="4">
    <location>
        <begin position="232"/>
        <end position="237"/>
    </location>
</feature>
<feature type="turn" evidence="4">
    <location>
        <begin position="251"/>
        <end position="256"/>
    </location>
</feature>
<feature type="strand" evidence="4">
    <location>
        <begin position="259"/>
        <end position="263"/>
    </location>
</feature>
<feature type="helix" evidence="4">
    <location>
        <begin position="273"/>
        <end position="276"/>
    </location>
</feature>
<feature type="strand" evidence="4">
    <location>
        <begin position="283"/>
        <end position="288"/>
    </location>
</feature>
<feature type="helix" evidence="4">
    <location>
        <begin position="297"/>
        <end position="301"/>
    </location>
</feature>
<feature type="strand" evidence="4">
    <location>
        <begin position="307"/>
        <end position="312"/>
    </location>
</feature>
<feature type="helix" evidence="4">
    <location>
        <begin position="321"/>
        <end position="325"/>
    </location>
</feature>
<feature type="strand" evidence="4">
    <location>
        <begin position="331"/>
        <end position="333"/>
    </location>
</feature>
<feature type="helix" evidence="4">
    <location>
        <begin position="347"/>
        <end position="349"/>
    </location>
</feature>
<feature type="strand" evidence="4">
    <location>
        <begin position="355"/>
        <end position="357"/>
    </location>
</feature>
<feature type="helix" evidence="4">
    <location>
        <begin position="368"/>
        <end position="372"/>
    </location>
</feature>
<feature type="strand" evidence="4">
    <location>
        <begin position="377"/>
        <end position="380"/>
    </location>
</feature>
<feature type="helix" evidence="4">
    <location>
        <begin position="382"/>
        <end position="391"/>
    </location>
</feature>
<feature type="helix" evidence="4">
    <location>
        <begin position="392"/>
        <end position="394"/>
    </location>
</feature>
<feature type="strand" evidence="4">
    <location>
        <begin position="395"/>
        <end position="397"/>
    </location>
</feature>
<feature type="strand" evidence="4">
    <location>
        <begin position="399"/>
        <end position="402"/>
    </location>
</feature>
<feature type="helix" evidence="4">
    <location>
        <begin position="410"/>
        <end position="414"/>
    </location>
</feature>
<reference key="1">
    <citation type="journal article" date="1998" name="DNA Res.">
        <title>Structural analysis of Arabidopsis thaliana chromosome 5. V. Sequence features of the regions of 1,381,565 bp covered by twenty one physically assigned P1 and TAC clones.</title>
        <authorList>
            <person name="Kaneko T."/>
            <person name="Kotani H."/>
            <person name="Nakamura Y."/>
            <person name="Sato S."/>
            <person name="Asamizu E."/>
            <person name="Miyajima N."/>
            <person name="Tabata S."/>
        </authorList>
    </citation>
    <scope>NUCLEOTIDE SEQUENCE [LARGE SCALE GENOMIC DNA]</scope>
    <source>
        <strain>cv. Columbia</strain>
    </source>
</reference>
<reference key="2">
    <citation type="journal article" date="2017" name="Plant J.">
        <title>Araport11: a complete reannotation of the Arabidopsis thaliana reference genome.</title>
        <authorList>
            <person name="Cheng C.Y."/>
            <person name="Krishnakumar V."/>
            <person name="Chan A.P."/>
            <person name="Thibaud-Nissen F."/>
            <person name="Schobel S."/>
            <person name="Town C.D."/>
        </authorList>
    </citation>
    <scope>GENOME REANNOTATION</scope>
    <source>
        <strain>cv. Columbia</strain>
    </source>
</reference>
<accession>Q9FKZ2</accession>
<comment type="function">
    <text evidence="1">Possible disease resistance protein.</text>
</comment>
<comment type="domain">
    <text evidence="1">The LRR repeats probably act as specificity determinant of pathogen recognition.</text>
</comment>
<comment type="similarity">
    <text evidence="3">Belongs to the disease resistance NB-LRR family.</text>
</comment>
<comment type="caution">
    <text evidence="3">Lacks the typical ATP binding site, suggesting that it may not be functional.</text>
</comment>
<comment type="online information" name="NIB-LRRS">
    <link uri="http://niblrrs.ucdavis.edu"/>
    <text>Functional and comparative genomics of disease resistance gene homologs</text>
</comment>